<organism>
    <name type="scientific">Mycobacterium tuberculosis (strain CDC 1551 / Oshkosh)</name>
    <dbReference type="NCBI Taxonomy" id="83331"/>
    <lineage>
        <taxon>Bacteria</taxon>
        <taxon>Bacillati</taxon>
        <taxon>Actinomycetota</taxon>
        <taxon>Actinomycetes</taxon>
        <taxon>Mycobacteriales</taxon>
        <taxon>Mycobacteriaceae</taxon>
        <taxon>Mycobacterium</taxon>
        <taxon>Mycobacterium tuberculosis complex</taxon>
    </lineage>
</organism>
<keyword id="KW-0924">Ammonia transport</keyword>
<keyword id="KW-1003">Cell membrane</keyword>
<keyword id="KW-0472">Membrane</keyword>
<keyword id="KW-1185">Reference proteome</keyword>
<keyword id="KW-0812">Transmembrane</keyword>
<keyword id="KW-1133">Transmembrane helix</keyword>
<keyword id="KW-0813">Transport</keyword>
<feature type="chain" id="PRO_0000426830" description="Ammonium transporter">
    <location>
        <begin position="1"/>
        <end position="477"/>
    </location>
</feature>
<feature type="transmembrane region" description="Helical" evidence="2">
    <location>
        <begin position="16"/>
        <end position="36"/>
    </location>
</feature>
<feature type="transmembrane region" description="Helical" evidence="2">
    <location>
        <begin position="53"/>
        <end position="73"/>
    </location>
</feature>
<feature type="transmembrane region" description="Helical" evidence="2">
    <location>
        <begin position="121"/>
        <end position="141"/>
    </location>
</feature>
<feature type="transmembrane region" description="Helical" evidence="2">
    <location>
        <begin position="150"/>
        <end position="170"/>
    </location>
</feature>
<feature type="transmembrane region" description="Helical" evidence="2">
    <location>
        <begin position="192"/>
        <end position="212"/>
    </location>
</feature>
<feature type="transmembrane region" description="Helical" evidence="2">
    <location>
        <begin position="229"/>
        <end position="249"/>
    </location>
</feature>
<feature type="transmembrane region" description="Helical" evidence="2">
    <location>
        <begin position="257"/>
        <end position="277"/>
    </location>
</feature>
<feature type="transmembrane region" description="Helical" evidence="2">
    <location>
        <begin position="290"/>
        <end position="310"/>
    </location>
</feature>
<feature type="transmembrane region" description="Helical" evidence="2">
    <location>
        <begin position="312"/>
        <end position="332"/>
    </location>
</feature>
<feature type="transmembrane region" description="Helical" evidence="2">
    <location>
        <begin position="344"/>
        <end position="364"/>
    </location>
</feature>
<feature type="transmembrane region" description="Helical" evidence="2">
    <location>
        <begin position="394"/>
        <end position="414"/>
    </location>
</feature>
<feature type="region of interest" description="Disordered" evidence="3">
    <location>
        <begin position="457"/>
        <end position="477"/>
    </location>
</feature>
<feature type="compositionally biased region" description="Basic and acidic residues" evidence="3">
    <location>
        <begin position="468"/>
        <end position="477"/>
    </location>
</feature>
<comment type="function">
    <text evidence="1">Involved in the uptake of ammonium/ammonia (NH(4)(+)/NH(3)).</text>
</comment>
<comment type="subunit">
    <text evidence="1">Homotrimer.</text>
</comment>
<comment type="subcellular location">
    <subcellularLocation>
        <location evidence="4">Cell membrane</location>
        <topology evidence="4">Multi-pass membrane protein</topology>
    </subcellularLocation>
</comment>
<comment type="similarity">
    <text evidence="4">Belongs to the ammonia transporter channel (TC 1.A.11.2) family.</text>
</comment>
<accession>P9WQ64</accession>
<accession>L0TDY4</accession>
<accession>P63519</accession>
<accession>Q10968</accession>
<proteinExistence type="inferred from homology"/>
<dbReference type="EMBL" id="AE000516">
    <property type="protein sequence ID" value="AAK47314.1"/>
    <property type="molecule type" value="Genomic_DNA"/>
</dbReference>
<dbReference type="PIR" id="H70747">
    <property type="entry name" value="H70747"/>
</dbReference>
<dbReference type="RefSeq" id="WP_003899540.1">
    <property type="nucleotide sequence ID" value="NZ_KK341227.1"/>
</dbReference>
<dbReference type="SMR" id="P9WQ64"/>
<dbReference type="KEGG" id="mtc:MT2988"/>
<dbReference type="PATRIC" id="fig|83331.31.peg.3228"/>
<dbReference type="HOGENOM" id="CLU_000445_33_0_11"/>
<dbReference type="Proteomes" id="UP000001020">
    <property type="component" value="Chromosome"/>
</dbReference>
<dbReference type="GO" id="GO:0005886">
    <property type="term" value="C:plasma membrane"/>
    <property type="evidence" value="ECO:0007669"/>
    <property type="project" value="UniProtKB-SubCell"/>
</dbReference>
<dbReference type="GO" id="GO:0008519">
    <property type="term" value="F:ammonium channel activity"/>
    <property type="evidence" value="ECO:0007669"/>
    <property type="project" value="InterPro"/>
</dbReference>
<dbReference type="FunFam" id="1.10.3430.10:FF:000007">
    <property type="entry name" value="Ammonium transporter"/>
    <property type="match status" value="1"/>
</dbReference>
<dbReference type="Gene3D" id="1.10.3430.10">
    <property type="entry name" value="Ammonium transporter AmtB like domains"/>
    <property type="match status" value="1"/>
</dbReference>
<dbReference type="InterPro" id="IPR029020">
    <property type="entry name" value="Ammonium/urea_transptr"/>
</dbReference>
<dbReference type="InterPro" id="IPR001905">
    <property type="entry name" value="Ammonium_transpt"/>
</dbReference>
<dbReference type="InterPro" id="IPR018047">
    <property type="entry name" value="Ammonium_transpt_CS"/>
</dbReference>
<dbReference type="InterPro" id="IPR024041">
    <property type="entry name" value="NH4_transpt_AmtB-like_dom"/>
</dbReference>
<dbReference type="NCBIfam" id="TIGR00836">
    <property type="entry name" value="amt"/>
    <property type="match status" value="1"/>
</dbReference>
<dbReference type="PANTHER" id="PTHR43029">
    <property type="entry name" value="AMMONIUM TRANSPORTER MEP2"/>
    <property type="match status" value="1"/>
</dbReference>
<dbReference type="PANTHER" id="PTHR43029:SF10">
    <property type="entry name" value="AMMONIUM TRANSPORTER MEP2"/>
    <property type="match status" value="1"/>
</dbReference>
<dbReference type="Pfam" id="PF00909">
    <property type="entry name" value="Ammonium_transp"/>
    <property type="match status" value="1"/>
</dbReference>
<dbReference type="SUPFAM" id="SSF111352">
    <property type="entry name" value="Ammonium transporter"/>
    <property type="match status" value="1"/>
</dbReference>
<dbReference type="PROSITE" id="PS01219">
    <property type="entry name" value="AMMONIUM_TRANSP"/>
    <property type="match status" value="1"/>
</dbReference>
<sequence length="477" mass="49241">MDQFPIMGVPDGGDTAWMLVSSALVLLMTPGLAFFYGGMVRSKSVLNMIMMSISAMGVVTVLWALYGYSIAFGDDVGNIAGNPSQYWGLKGLIGVNAVAADPSTQTAAVNIPLAGTLPATVFVAFQLMFAIITVALISGAVADRLKFGAWLLFAGLWATFVYFPVAHWVFAFDGFAAEHGGWIANKLHAIDFAGGTAVHINAGVAALMLAIVLGKRRGWPATLFRPHNLPFVMLGAALLWFGWYGFNAGSATTANGVAGATFVTTTIATAAAMLGWLLTERVRDGKATTLGAASGIVAGLVAITPSCSSVNVLGALAVGVSAGVLCALAVGLKFKLGFDDSLDVVGVHLVGGLVGTLLVGLLAAPEAPAINGVAGVSKGLFYGGGFAQLERQALGACSVLVYSGIITLILALILKFTIGLRLDAEQESTGIDEAEHAESGYDFAVASGSVLPPRVTVEDSRNGIQERIGQKVEAEPK</sequence>
<evidence type="ECO:0000250" key="1">
    <source>
        <dbReference type="UniProtKB" id="P69681"/>
    </source>
</evidence>
<evidence type="ECO:0000255" key="2"/>
<evidence type="ECO:0000256" key="3">
    <source>
        <dbReference type="SAM" id="MobiDB-lite"/>
    </source>
</evidence>
<evidence type="ECO:0000305" key="4"/>
<gene>
    <name type="primary">amt</name>
    <name type="ordered locus">MT2988</name>
</gene>
<reference key="1">
    <citation type="journal article" date="2002" name="J. Bacteriol.">
        <title>Whole-genome comparison of Mycobacterium tuberculosis clinical and laboratory strains.</title>
        <authorList>
            <person name="Fleischmann R.D."/>
            <person name="Alland D."/>
            <person name="Eisen J.A."/>
            <person name="Carpenter L."/>
            <person name="White O."/>
            <person name="Peterson J.D."/>
            <person name="DeBoy R.T."/>
            <person name="Dodson R.J."/>
            <person name="Gwinn M.L."/>
            <person name="Haft D.H."/>
            <person name="Hickey E.K."/>
            <person name="Kolonay J.F."/>
            <person name="Nelson W.C."/>
            <person name="Umayam L.A."/>
            <person name="Ermolaeva M.D."/>
            <person name="Salzberg S.L."/>
            <person name="Delcher A."/>
            <person name="Utterback T.R."/>
            <person name="Weidman J.F."/>
            <person name="Khouri H.M."/>
            <person name="Gill J."/>
            <person name="Mikula A."/>
            <person name="Bishai W."/>
            <person name="Jacobs W.R. Jr."/>
            <person name="Venter J.C."/>
            <person name="Fraser C.M."/>
        </authorList>
    </citation>
    <scope>NUCLEOTIDE SEQUENCE [LARGE SCALE GENOMIC DNA]</scope>
    <source>
        <strain>CDC 1551 / Oshkosh</strain>
    </source>
</reference>
<name>AMT_MYCTO</name>
<protein>
    <recommendedName>
        <fullName evidence="1">Ammonium transporter</fullName>
    </recommendedName>
    <alternativeName>
        <fullName evidence="1">Ammonia channel</fullName>
    </alternativeName>
    <alternativeName>
        <fullName evidence="1">Ammonium channel</fullName>
    </alternativeName>
</protein>